<protein>
    <recommendedName>
        <fullName evidence="1">UPF0060 membrane protein Rleg2_1018</fullName>
    </recommendedName>
</protein>
<evidence type="ECO:0000255" key="1">
    <source>
        <dbReference type="HAMAP-Rule" id="MF_00010"/>
    </source>
</evidence>
<sequence length="106" mass="11606">MTYIIYAFAAVFEIGGCFAFWAWLKLGKPVWWLAPGMVSLALFAWLLTLVPSEAAGRTFAAYGGIYIAASLLWLWLVENRVPDRYDIGGALVCLAGTSIILFGPRG</sequence>
<reference key="1">
    <citation type="journal article" date="2010" name="Stand. Genomic Sci.">
        <title>Complete genome sequence of Rhizobium leguminosarum bv trifolii strain WSM2304, an effective microsymbiont of the South American clover Trifolium polymorphum.</title>
        <authorList>
            <person name="Reeve W."/>
            <person name="O'Hara G."/>
            <person name="Chain P."/>
            <person name="Ardley J."/>
            <person name="Brau L."/>
            <person name="Nandesena K."/>
            <person name="Tiwari R."/>
            <person name="Malfatti S."/>
            <person name="Kiss H."/>
            <person name="Lapidus A."/>
            <person name="Copeland A."/>
            <person name="Nolan M."/>
            <person name="Land M."/>
            <person name="Ivanova N."/>
            <person name="Mavromatis K."/>
            <person name="Markowitz V."/>
            <person name="Kyrpides N."/>
            <person name="Melino V."/>
            <person name="Denton M."/>
            <person name="Yates R."/>
            <person name="Howieson J."/>
        </authorList>
    </citation>
    <scope>NUCLEOTIDE SEQUENCE [LARGE SCALE GENOMIC DNA]</scope>
    <source>
        <strain>WSM2304</strain>
    </source>
</reference>
<proteinExistence type="inferred from homology"/>
<accession>B5ZW93</accession>
<dbReference type="EMBL" id="CP001191">
    <property type="protein sequence ID" value="ACI54312.1"/>
    <property type="molecule type" value="Genomic_DNA"/>
</dbReference>
<dbReference type="RefSeq" id="WP_012557136.1">
    <property type="nucleotide sequence ID" value="NC_011369.1"/>
</dbReference>
<dbReference type="SMR" id="B5ZW93"/>
<dbReference type="STRING" id="395492.Rleg2_1018"/>
<dbReference type="KEGG" id="rlt:Rleg2_1018"/>
<dbReference type="eggNOG" id="COG1742">
    <property type="taxonomic scope" value="Bacteria"/>
</dbReference>
<dbReference type="HOGENOM" id="CLU_117653_1_0_5"/>
<dbReference type="Proteomes" id="UP000008330">
    <property type="component" value="Chromosome"/>
</dbReference>
<dbReference type="GO" id="GO:0005886">
    <property type="term" value="C:plasma membrane"/>
    <property type="evidence" value="ECO:0007669"/>
    <property type="project" value="UniProtKB-SubCell"/>
</dbReference>
<dbReference type="HAMAP" id="MF_00010">
    <property type="entry name" value="UPF0060"/>
    <property type="match status" value="1"/>
</dbReference>
<dbReference type="InterPro" id="IPR003844">
    <property type="entry name" value="UPF0060"/>
</dbReference>
<dbReference type="NCBIfam" id="NF002586">
    <property type="entry name" value="PRK02237.1"/>
    <property type="match status" value="1"/>
</dbReference>
<dbReference type="PANTHER" id="PTHR36116">
    <property type="entry name" value="UPF0060 MEMBRANE PROTEIN YNFA"/>
    <property type="match status" value="1"/>
</dbReference>
<dbReference type="PANTHER" id="PTHR36116:SF1">
    <property type="entry name" value="UPF0060 MEMBRANE PROTEIN YNFA"/>
    <property type="match status" value="1"/>
</dbReference>
<dbReference type="Pfam" id="PF02694">
    <property type="entry name" value="UPF0060"/>
    <property type="match status" value="1"/>
</dbReference>
<dbReference type="SUPFAM" id="SSF103481">
    <property type="entry name" value="Multidrug resistance efflux transporter EmrE"/>
    <property type="match status" value="1"/>
</dbReference>
<organism>
    <name type="scientific">Rhizobium leguminosarum bv. trifolii (strain WSM2304)</name>
    <dbReference type="NCBI Taxonomy" id="395492"/>
    <lineage>
        <taxon>Bacteria</taxon>
        <taxon>Pseudomonadati</taxon>
        <taxon>Pseudomonadota</taxon>
        <taxon>Alphaproteobacteria</taxon>
        <taxon>Hyphomicrobiales</taxon>
        <taxon>Rhizobiaceae</taxon>
        <taxon>Rhizobium/Agrobacterium group</taxon>
        <taxon>Rhizobium</taxon>
    </lineage>
</organism>
<comment type="subcellular location">
    <subcellularLocation>
        <location evidence="1">Cell inner membrane</location>
        <topology evidence="1">Multi-pass membrane protein</topology>
    </subcellularLocation>
</comment>
<comment type="similarity">
    <text evidence="1">Belongs to the UPF0060 family.</text>
</comment>
<gene>
    <name type="ordered locus">Rleg2_1018</name>
</gene>
<feature type="chain" id="PRO_1000089251" description="UPF0060 membrane protein Rleg2_1018">
    <location>
        <begin position="1"/>
        <end position="106"/>
    </location>
</feature>
<feature type="transmembrane region" description="Helical" evidence="1">
    <location>
        <begin position="4"/>
        <end position="24"/>
    </location>
</feature>
<feature type="transmembrane region" description="Helical" evidence="1">
    <location>
        <begin position="30"/>
        <end position="50"/>
    </location>
</feature>
<feature type="transmembrane region" description="Helical" evidence="1">
    <location>
        <begin position="58"/>
        <end position="78"/>
    </location>
</feature>
<feature type="transmembrane region" description="Helical" evidence="1">
    <location>
        <begin position="86"/>
        <end position="106"/>
    </location>
</feature>
<name>Y1018_RHILW</name>
<keyword id="KW-0997">Cell inner membrane</keyword>
<keyword id="KW-1003">Cell membrane</keyword>
<keyword id="KW-0472">Membrane</keyword>
<keyword id="KW-1185">Reference proteome</keyword>
<keyword id="KW-0812">Transmembrane</keyword>
<keyword id="KW-1133">Transmembrane helix</keyword>